<name>MET2_YEAST</name>
<comment type="function">
    <text evidence="1">Commits homoserine to the methionine biosynthesis pathway by catalyzing its O-acetylation.</text>
</comment>
<comment type="catalytic activity">
    <reaction evidence="1">
        <text>L-homoserine + acetyl-CoA = O-acetyl-L-homoserine + CoA</text>
        <dbReference type="Rhea" id="RHEA:13701"/>
        <dbReference type="ChEBI" id="CHEBI:57287"/>
        <dbReference type="ChEBI" id="CHEBI:57288"/>
        <dbReference type="ChEBI" id="CHEBI:57476"/>
        <dbReference type="ChEBI" id="CHEBI:57716"/>
        <dbReference type="EC" id="2.3.1.31"/>
    </reaction>
    <physiologicalReaction direction="left-to-right" evidence="1">
        <dbReference type="Rhea" id="RHEA:13702"/>
    </physiologicalReaction>
</comment>
<comment type="pathway">
    <text evidence="1">Amino-acid biosynthesis; L-methionine biosynthesis via de novo pathway; O-acetyl-L-homoserine from L-homoserine: step 1/1.</text>
</comment>
<comment type="subcellular location">
    <subcellularLocation>
        <location evidence="5 6">Cytoplasm</location>
    </subcellularLocation>
</comment>
<comment type="miscellaneous">
    <text evidence="7">Present with 2240 molecules/cell in log phase SD medium.</text>
</comment>
<comment type="similarity">
    <text evidence="8">Belongs to the AB hydrolase superfamily. MetX family.</text>
</comment>
<gene>
    <name type="primary">MET2</name>
    <name type="ordered locus">YNL277W</name>
    <name type="ORF">N0615</name>
</gene>
<dbReference type="EC" id="2.3.1.31" evidence="1"/>
<dbReference type="EMBL" id="M15675">
    <property type="protein sequence ID" value="AAA34775.1"/>
    <property type="molecule type" value="Genomic_DNA"/>
</dbReference>
<dbReference type="EMBL" id="AJ001940">
    <property type="protein sequence ID" value="CAA05109.1"/>
    <property type="molecule type" value="Genomic_DNA"/>
</dbReference>
<dbReference type="EMBL" id="Z71553">
    <property type="protein sequence ID" value="CAA96188.1"/>
    <property type="molecule type" value="Genomic_DNA"/>
</dbReference>
<dbReference type="EMBL" id="BK006947">
    <property type="protein sequence ID" value="DAA10284.1"/>
    <property type="molecule type" value="Genomic_DNA"/>
</dbReference>
<dbReference type="PIR" id="S63251">
    <property type="entry name" value="S63251"/>
</dbReference>
<dbReference type="RefSeq" id="NP_014122.1">
    <property type="nucleotide sequence ID" value="NM_001183115.1"/>
</dbReference>
<dbReference type="SMR" id="P08465"/>
<dbReference type="BioGRID" id="35564">
    <property type="interactions" value="37"/>
</dbReference>
<dbReference type="DIP" id="DIP-3985N"/>
<dbReference type="FunCoup" id="P08465">
    <property type="interactions" value="216"/>
</dbReference>
<dbReference type="IntAct" id="P08465">
    <property type="interactions" value="2"/>
</dbReference>
<dbReference type="STRING" id="4932.YNL277W"/>
<dbReference type="ESTHER" id="yeast-met2">
    <property type="family name" value="Homoserine_transacetylase"/>
</dbReference>
<dbReference type="MEROPS" id="S33.A41"/>
<dbReference type="iPTMnet" id="P08465"/>
<dbReference type="PaxDb" id="4932-YNL277W"/>
<dbReference type="PeptideAtlas" id="P08465"/>
<dbReference type="DNASU" id="855444"/>
<dbReference type="EnsemblFungi" id="YNL277W_mRNA">
    <property type="protein sequence ID" value="YNL277W"/>
    <property type="gene ID" value="YNL277W"/>
</dbReference>
<dbReference type="GeneID" id="855444"/>
<dbReference type="KEGG" id="sce:YNL277W"/>
<dbReference type="AGR" id="SGD:S000005221"/>
<dbReference type="SGD" id="S000005221">
    <property type="gene designation" value="MET2"/>
</dbReference>
<dbReference type="VEuPathDB" id="FungiDB:YNL277W"/>
<dbReference type="eggNOG" id="ENOG502QRIX">
    <property type="taxonomic scope" value="Eukaryota"/>
</dbReference>
<dbReference type="HOGENOM" id="CLU_028760_5_0_1"/>
<dbReference type="InParanoid" id="P08465"/>
<dbReference type="OMA" id="LGGCQGT"/>
<dbReference type="OrthoDB" id="191364at2759"/>
<dbReference type="BioCyc" id="MetaCyc:YNL277W-MONOMER"/>
<dbReference type="BioCyc" id="YEAST:YNL277W-MONOMER"/>
<dbReference type="SABIO-RK" id="P08465"/>
<dbReference type="UniPathway" id="UPA00051">
    <property type="reaction ID" value="UER00074"/>
</dbReference>
<dbReference type="BioGRID-ORCS" id="855444">
    <property type="hits" value="0 hits in 10 CRISPR screens"/>
</dbReference>
<dbReference type="PRO" id="PR:P08465"/>
<dbReference type="Proteomes" id="UP000002311">
    <property type="component" value="Chromosome XIV"/>
</dbReference>
<dbReference type="RNAct" id="P08465">
    <property type="molecule type" value="protein"/>
</dbReference>
<dbReference type="GO" id="GO:0005737">
    <property type="term" value="C:cytoplasm"/>
    <property type="evidence" value="ECO:0007005"/>
    <property type="project" value="SGD"/>
</dbReference>
<dbReference type="GO" id="GO:0004414">
    <property type="term" value="F:homoserine O-acetyltransferase activity"/>
    <property type="evidence" value="ECO:0000314"/>
    <property type="project" value="SGD"/>
</dbReference>
<dbReference type="GO" id="GO:0009092">
    <property type="term" value="P:homoserine metabolic process"/>
    <property type="evidence" value="ECO:0000314"/>
    <property type="project" value="SGD"/>
</dbReference>
<dbReference type="GO" id="GO:0009086">
    <property type="term" value="P:methionine biosynthetic process"/>
    <property type="evidence" value="ECO:0000315"/>
    <property type="project" value="SGD"/>
</dbReference>
<dbReference type="GO" id="GO:0000096">
    <property type="term" value="P:sulfur amino acid metabolic process"/>
    <property type="evidence" value="ECO:0000315"/>
    <property type="project" value="SGD"/>
</dbReference>
<dbReference type="Gene3D" id="3.40.50.1820">
    <property type="entry name" value="alpha/beta hydrolase"/>
    <property type="match status" value="1"/>
</dbReference>
<dbReference type="HAMAP" id="MF_00296">
    <property type="entry name" value="MetX_acyltransf"/>
    <property type="match status" value="1"/>
</dbReference>
<dbReference type="InterPro" id="IPR000073">
    <property type="entry name" value="AB_hydrolase_1"/>
</dbReference>
<dbReference type="InterPro" id="IPR029058">
    <property type="entry name" value="AB_hydrolase_fold"/>
</dbReference>
<dbReference type="InterPro" id="IPR008220">
    <property type="entry name" value="HAT_MetX-like"/>
</dbReference>
<dbReference type="NCBIfam" id="TIGR01392">
    <property type="entry name" value="homoserO_Ac_trn"/>
    <property type="match status" value="1"/>
</dbReference>
<dbReference type="PANTHER" id="PTHR32268">
    <property type="entry name" value="HOMOSERINE O-ACETYLTRANSFERASE"/>
    <property type="match status" value="1"/>
</dbReference>
<dbReference type="PANTHER" id="PTHR32268:SF11">
    <property type="entry name" value="HOMOSERINE O-ACETYLTRANSFERASE"/>
    <property type="match status" value="1"/>
</dbReference>
<dbReference type="Pfam" id="PF00561">
    <property type="entry name" value="Abhydrolase_1"/>
    <property type="match status" value="1"/>
</dbReference>
<dbReference type="PIRSF" id="PIRSF000443">
    <property type="entry name" value="Homoser_Ac_trans"/>
    <property type="match status" value="1"/>
</dbReference>
<dbReference type="SUPFAM" id="SSF53474">
    <property type="entry name" value="alpha/beta-Hydrolases"/>
    <property type="match status" value="1"/>
</dbReference>
<proteinExistence type="evidence at protein level"/>
<protein>
    <recommendedName>
        <fullName>Homoserine O-acetyltransferase</fullName>
        <ecNumber evidence="1">2.3.1.31</ecNumber>
    </recommendedName>
    <alternativeName>
        <fullName>Homoserine O-trans-acetylase</fullName>
    </alternativeName>
</protein>
<organism>
    <name type="scientific">Saccharomyces cerevisiae (strain ATCC 204508 / S288c)</name>
    <name type="common">Baker's yeast</name>
    <dbReference type="NCBI Taxonomy" id="559292"/>
    <lineage>
        <taxon>Eukaryota</taxon>
        <taxon>Fungi</taxon>
        <taxon>Dikarya</taxon>
        <taxon>Ascomycota</taxon>
        <taxon>Saccharomycotina</taxon>
        <taxon>Saccharomycetes</taxon>
        <taxon>Saccharomycetales</taxon>
        <taxon>Saccharomycetaceae</taxon>
        <taxon>Saccharomyces</taxon>
    </lineage>
</organism>
<feature type="chain" id="PRO_0000155758" description="Homoserine O-acetyltransferase">
    <location>
        <begin position="1"/>
        <end position="486"/>
    </location>
</feature>
<feature type="domain" description="AB hydrolase-1" evidence="3">
    <location>
        <begin position="66"/>
        <end position="436"/>
    </location>
</feature>
<feature type="region of interest" description="Disordered" evidence="4">
    <location>
        <begin position="248"/>
        <end position="281"/>
    </location>
</feature>
<feature type="compositionally biased region" description="Polar residues" evidence="4">
    <location>
        <begin position="250"/>
        <end position="261"/>
    </location>
</feature>
<feature type="compositionally biased region" description="Polar residues" evidence="4">
    <location>
        <begin position="270"/>
        <end position="280"/>
    </location>
</feature>
<feature type="active site" description="Nucleophile" evidence="2">
    <location>
        <position position="162"/>
    </location>
</feature>
<feature type="active site" evidence="2">
    <location>
        <position position="401"/>
    </location>
</feature>
<feature type="active site" evidence="2">
    <location>
        <position position="430"/>
    </location>
</feature>
<feature type="sequence conflict" description="In Ref. 1 and 2." evidence="8" ref="1 2">
    <original>GHDAFLLEFKLINKLIVQFLKTNCKAITDAAPRAWGGDVGNDETKTSVFGEAEEVTNW</original>
    <variation>ATMPSYWSLS</variation>
    <location>
        <begin position="429"/>
        <end position="486"/>
    </location>
</feature>
<accession>P08465</accession>
<accession>D6W0R8</accession>
<keyword id="KW-0012">Acyltransferase</keyword>
<keyword id="KW-0028">Amino-acid biosynthesis</keyword>
<keyword id="KW-0963">Cytoplasm</keyword>
<keyword id="KW-0486">Methionine biosynthesis</keyword>
<keyword id="KW-1185">Reference proteome</keyword>
<keyword id="KW-0808">Transferase</keyword>
<reference key="1">
    <citation type="journal article" date="1986" name="Gene">
        <title>The MET2 gene of Saccharomyces cerevisiae: molecular cloning and nucleotide sequence.</title>
        <authorList>
            <person name="Langin T."/>
            <person name="Faugeron G."/>
            <person name="Goyon C."/>
            <person name="Nicolas A."/>
            <person name="Rossignol J.-L."/>
        </authorList>
    </citation>
    <scope>NUCLEOTIDE SEQUENCE [GENOMIC DNA]</scope>
</reference>
<reference key="2">
    <citation type="submission" date="1997-10" db="EMBL/GenBank/DDBJ databases">
        <authorList>
            <person name="Hell R."/>
        </authorList>
    </citation>
    <scope>NUCLEOTIDE SEQUENCE [GENOMIC DNA]</scope>
</reference>
<reference key="3">
    <citation type="journal article" date="1997" name="Nature">
        <title>The nucleotide sequence of Saccharomyces cerevisiae chromosome XIV and its evolutionary implications.</title>
        <authorList>
            <person name="Philippsen P."/>
            <person name="Kleine K."/>
            <person name="Poehlmann R."/>
            <person name="Duesterhoeft A."/>
            <person name="Hamberg K."/>
            <person name="Hegemann J.H."/>
            <person name="Obermaier B."/>
            <person name="Urrestarazu L.A."/>
            <person name="Aert R."/>
            <person name="Albermann K."/>
            <person name="Altmann R."/>
            <person name="Andre B."/>
            <person name="Baladron V."/>
            <person name="Ballesta J.P.G."/>
            <person name="Becam A.-M."/>
            <person name="Beinhauer J.D."/>
            <person name="Boskovic J."/>
            <person name="Buitrago M.J."/>
            <person name="Bussereau F."/>
            <person name="Coster F."/>
            <person name="Crouzet M."/>
            <person name="D'Angelo M."/>
            <person name="Dal Pero F."/>
            <person name="De Antoni A."/>
            <person name="del Rey F."/>
            <person name="Doignon F."/>
            <person name="Domdey H."/>
            <person name="Dubois E."/>
            <person name="Fiedler T.A."/>
            <person name="Fleig U."/>
            <person name="Floeth M."/>
            <person name="Fritz C."/>
            <person name="Gaillardin C."/>
            <person name="Garcia-Cantalejo J.M."/>
            <person name="Glansdorff N."/>
            <person name="Goffeau A."/>
            <person name="Gueldener U."/>
            <person name="Herbert C.J."/>
            <person name="Heumann K."/>
            <person name="Heuss-Neitzel D."/>
            <person name="Hilbert H."/>
            <person name="Hinni K."/>
            <person name="Iraqui Houssaini I."/>
            <person name="Jacquet M."/>
            <person name="Jimenez A."/>
            <person name="Jonniaux J.-L."/>
            <person name="Karpfinger-Hartl L."/>
            <person name="Lanfranchi G."/>
            <person name="Lepingle A."/>
            <person name="Levesque H."/>
            <person name="Lyck R."/>
            <person name="Maftahi M."/>
            <person name="Mallet L."/>
            <person name="Maurer C.T.C."/>
            <person name="Messenguy F."/>
            <person name="Mewes H.-W."/>
            <person name="Moestl D."/>
            <person name="Nasr F."/>
            <person name="Nicaud J.-M."/>
            <person name="Niedenthal R.K."/>
            <person name="Pandolfo D."/>
            <person name="Pierard A."/>
            <person name="Piravandi E."/>
            <person name="Planta R.J."/>
            <person name="Pohl T.M."/>
            <person name="Purnelle B."/>
            <person name="Rebischung C."/>
            <person name="Remacha M.A."/>
            <person name="Revuelta J.L."/>
            <person name="Rinke M."/>
            <person name="Saiz J.E."/>
            <person name="Sartorello F."/>
            <person name="Scherens B."/>
            <person name="Sen-Gupta M."/>
            <person name="Soler-Mira A."/>
            <person name="Urbanus J.H.M."/>
            <person name="Valle G."/>
            <person name="Van Dyck L."/>
            <person name="Verhasselt P."/>
            <person name="Vierendeels F."/>
            <person name="Vissers S."/>
            <person name="Voet M."/>
            <person name="Volckaert G."/>
            <person name="Wach A."/>
            <person name="Wambutt R."/>
            <person name="Wedler H."/>
            <person name="Zollner A."/>
            <person name="Hani J."/>
        </authorList>
    </citation>
    <scope>NUCLEOTIDE SEQUENCE [LARGE SCALE GENOMIC DNA]</scope>
    <source>
        <strain>ATCC 204508 / S288c</strain>
    </source>
</reference>
<reference key="4">
    <citation type="journal article" date="2014" name="G3 (Bethesda)">
        <title>The reference genome sequence of Saccharomyces cerevisiae: Then and now.</title>
        <authorList>
            <person name="Engel S.R."/>
            <person name="Dietrich F.S."/>
            <person name="Fisk D.G."/>
            <person name="Binkley G."/>
            <person name="Balakrishnan R."/>
            <person name="Costanzo M.C."/>
            <person name="Dwight S.S."/>
            <person name="Hitz B.C."/>
            <person name="Karra K."/>
            <person name="Nash R.S."/>
            <person name="Weng S."/>
            <person name="Wong E.D."/>
            <person name="Lloyd P."/>
            <person name="Skrzypek M.S."/>
            <person name="Miyasato S.R."/>
            <person name="Simison M."/>
            <person name="Cherry J.M."/>
        </authorList>
    </citation>
    <scope>GENOME REANNOTATION</scope>
    <source>
        <strain>ATCC 204508 / S288c</strain>
    </source>
</reference>
<reference key="5">
    <citation type="journal article" date="2002" name="Genes Dev.">
        <title>Subcellular localization of the yeast proteome.</title>
        <authorList>
            <person name="Kumar A."/>
            <person name="Agarwal S."/>
            <person name="Heyman J.A."/>
            <person name="Matson S."/>
            <person name="Heidtman M."/>
            <person name="Piccirillo S."/>
            <person name="Umansky L."/>
            <person name="Drawid A."/>
            <person name="Jansen R."/>
            <person name="Liu Y."/>
            <person name="Cheung K.-H."/>
            <person name="Miller P."/>
            <person name="Gerstein M."/>
            <person name="Roeder G.S."/>
            <person name="Snyder M."/>
        </authorList>
    </citation>
    <scope>SUBCELLULAR LOCATION [LARGE SCALE ANALYSIS]</scope>
</reference>
<reference key="6">
    <citation type="journal article" date="2003" name="Nature">
        <title>Global analysis of protein localization in budding yeast.</title>
        <authorList>
            <person name="Huh W.-K."/>
            <person name="Falvo J.V."/>
            <person name="Gerke L.C."/>
            <person name="Carroll A.S."/>
            <person name="Howson R.W."/>
            <person name="Weissman J.S."/>
            <person name="O'Shea E.K."/>
        </authorList>
    </citation>
    <scope>SUBCELLULAR LOCATION [LARGE SCALE ANALYSIS]</scope>
</reference>
<reference key="7">
    <citation type="journal article" date="2003" name="Nature">
        <title>Global analysis of protein expression in yeast.</title>
        <authorList>
            <person name="Ghaemmaghami S."/>
            <person name="Huh W.-K."/>
            <person name="Bower K."/>
            <person name="Howson R.W."/>
            <person name="Belle A."/>
            <person name="Dephoure N."/>
            <person name="O'Shea E.K."/>
            <person name="Weissman J.S."/>
        </authorList>
    </citation>
    <scope>LEVEL OF PROTEIN EXPRESSION [LARGE SCALE ANALYSIS]</scope>
</reference>
<evidence type="ECO:0000250" key="1">
    <source>
        <dbReference type="UniProtKB" id="O60062"/>
    </source>
</evidence>
<evidence type="ECO:0000250" key="2">
    <source>
        <dbReference type="UniProtKB" id="P45131"/>
    </source>
</evidence>
<evidence type="ECO:0000255" key="3"/>
<evidence type="ECO:0000256" key="4">
    <source>
        <dbReference type="SAM" id="MobiDB-lite"/>
    </source>
</evidence>
<evidence type="ECO:0000269" key="5">
    <source>
    </source>
</evidence>
<evidence type="ECO:0000269" key="6">
    <source>
    </source>
</evidence>
<evidence type="ECO:0000269" key="7">
    <source>
    </source>
</evidence>
<evidence type="ECO:0000305" key="8"/>
<sequence>MSHTLKSKTLQELDIEEIKETNPLLKLVQGQRIVQVPELVLESGVVINNFPIAYKTWGTLNEAGDNVLVICHALTGSADVADWWGPLLGNDLAFDPSRFFIICLNSMGSPYGSFSPLTINEETGVRYGPEFPLCTVRDDVRAHRIVLDSLGVKSIACVIGGSMGGMLSLEWAAMYGKEYVKNMVALATSARHSAWCISWSEAQRQSIYSDPNYLDGYYPVEEQPVAGLSAARMSALLTYRTRNSFENKFSRRSPSIAQQQKAQREETRKPSTVSEHSLQIHNDGYKTKASTAIAGISGQKGQSVVSTASSSDSLNSSTSMTSVSSVTGEVKDIKPAQTYFSAQSYLRYQGTKFINRFDANCYIAITRKLDTHDLARDRVDDITEVLSTIQQPSLIIGIQSDGLFTYSEQEFLAEHIPKSQLEKIESPEGHDAFLLEFKLINKLIVQFLKTNCKAITDAAPRAWGGDVGNDETKTSVFGEAEEVTNW</sequence>